<sequence>MITLFLILCYFILIFNIIVPAISEKMRRERAAYVNYKRLNKNFICVDDRLFSYNFTTSGIKAKVAVDNKNVPIPCSEINEVNNNKDVDTLYCDKDRDDIPGFTRSCYRAYSDLFFTT</sequence>
<accession>P0DSR7</accession>
<accession>P33844</accession>
<keyword id="KW-1015">Disulfide bond</keyword>
<keyword id="KW-1168">Fusion of virus membrane with host membrane</keyword>
<keyword id="KW-0472">Membrane</keyword>
<keyword id="KW-0597">Phosphoprotein</keyword>
<keyword id="KW-1185">Reference proteome</keyword>
<keyword id="KW-0735">Signal-anchor</keyword>
<keyword id="KW-0812">Transmembrane</keyword>
<keyword id="KW-1133">Transmembrane helix</keyword>
<keyword id="KW-0261">Viral envelope protein</keyword>
<keyword id="KW-1162">Viral penetration into host cytoplasm</keyword>
<keyword id="KW-0946">Virion</keyword>
<keyword id="KW-1160">Virus entry into host cell</keyword>
<gene>
    <name type="primary">OPG147</name>
    <name type="ORF">A21L</name>
</gene>
<comment type="function">
    <text evidence="1">Envelope protein part of the entry-fusion complex responsible for the virus membrane fusion with host cell membrane during virus entry. Also plays a role in cell-cell fusion (syncytium formation).</text>
</comment>
<comment type="subunit">
    <text evidence="1">Part of a stable entry-fusion complex (EFC) which is at least composed of proteins OPG143, OPG147, OPG155, OPG086, OPG094, OPG107, OPG104, and OPG099. Formation of the viral membrane is necessary for the assembly of the complex.</text>
</comment>
<comment type="subcellular location">
    <subcellularLocation>
        <location evidence="1">Virion membrane</location>
        <topology evidence="1">Single-pass type III membrane protein</topology>
    </subcellularLocation>
    <text evidence="1">Component of the mature virion (MV) membrane. The mature virion is located in the cytoplasm of infected cells and is probably released by cell lysis.</text>
</comment>
<comment type="PTM">
    <text evidence="1">Contains two intramolecular disulfide bonds. They are created by the viral disulfide bond formation pathway, a poxvirus-specific pathway that operates on the cytoplasmic side of the MV membranes.</text>
</comment>
<comment type="similarity">
    <text evidence="3">Belongs to the orthopoxvirus OPG147 family.</text>
</comment>
<dbReference type="EMBL" id="X69198">
    <property type="protein sequence ID" value="CAA49066.1"/>
    <property type="molecule type" value="Genomic_DNA"/>
</dbReference>
<dbReference type="PIR" id="D36850">
    <property type="entry name" value="D36850"/>
</dbReference>
<dbReference type="SMR" id="P0DSR7"/>
<dbReference type="KEGG" id="vg:1486496"/>
<dbReference type="Proteomes" id="UP000002060">
    <property type="component" value="Segment"/>
</dbReference>
<dbReference type="GO" id="GO:0016020">
    <property type="term" value="C:membrane"/>
    <property type="evidence" value="ECO:0007669"/>
    <property type="project" value="UniProtKB-KW"/>
</dbReference>
<dbReference type="GO" id="GO:0019031">
    <property type="term" value="C:viral envelope"/>
    <property type="evidence" value="ECO:0007669"/>
    <property type="project" value="UniProtKB-KW"/>
</dbReference>
<dbReference type="GO" id="GO:0055036">
    <property type="term" value="C:virion membrane"/>
    <property type="evidence" value="ECO:0007669"/>
    <property type="project" value="UniProtKB-SubCell"/>
</dbReference>
<dbReference type="GO" id="GO:0039663">
    <property type="term" value="P:membrane fusion involved in viral entry into host cell"/>
    <property type="evidence" value="ECO:0007669"/>
    <property type="project" value="UniProtKB-KW"/>
</dbReference>
<dbReference type="GO" id="GO:0046718">
    <property type="term" value="P:symbiont entry into host cell"/>
    <property type="evidence" value="ECO:0007669"/>
    <property type="project" value="UniProtKB-KW"/>
</dbReference>
<dbReference type="InterPro" id="IPR007987">
    <property type="entry name" value="Poxvirus_A21"/>
</dbReference>
<dbReference type="Pfam" id="PF05323">
    <property type="entry name" value="Pox_A21"/>
    <property type="match status" value="1"/>
</dbReference>
<proteinExistence type="inferred from homology"/>
<organismHost>
    <name type="scientific">Homo sapiens</name>
    <name type="common">Human</name>
    <dbReference type="NCBI Taxonomy" id="9606"/>
</organismHost>
<protein>
    <recommendedName>
        <fullName>Virion membrane protein OPG147</fullName>
    </recommendedName>
</protein>
<reference key="1">
    <citation type="journal article" date="1993" name="FEBS Lett.">
        <title>Genes of variola and vaccinia viruses necessary to overcome the host protective mechanisms.</title>
        <authorList>
            <person name="Shchelkunov S.N."/>
            <person name="Blinov V.M."/>
            <person name="Sandakhchiev L.S."/>
        </authorList>
    </citation>
    <scope>NUCLEOTIDE SEQUENCE [LARGE SCALE GENOMIC DNA]</scope>
</reference>
<name>PG147_VAR67</name>
<evidence type="ECO:0000250" key="1">
    <source>
        <dbReference type="UniProtKB" id="P68712"/>
    </source>
</evidence>
<evidence type="ECO:0000255" key="2"/>
<evidence type="ECO:0000305" key="3"/>
<feature type="chain" id="PRO_0000099273" description="Virion membrane protein OPG147">
    <location>
        <begin position="1"/>
        <end position="117"/>
    </location>
</feature>
<feature type="transmembrane region" description="Helical; Signal-anchor for type III membrane protein" evidence="2">
    <location>
        <begin position="1"/>
        <end position="21"/>
    </location>
</feature>
<feature type="topological domain" description="Virion surface" evidence="2">
    <location>
        <begin position="22"/>
        <end position="117"/>
    </location>
</feature>
<organism>
    <name type="scientific">Variola virus (isolate Human/India/Ind3/1967)</name>
    <name type="common">VARV</name>
    <name type="synonym">Smallpox virus</name>
    <dbReference type="NCBI Taxonomy" id="587200"/>
    <lineage>
        <taxon>Viruses</taxon>
        <taxon>Varidnaviria</taxon>
        <taxon>Bamfordvirae</taxon>
        <taxon>Nucleocytoviricota</taxon>
        <taxon>Pokkesviricetes</taxon>
        <taxon>Chitovirales</taxon>
        <taxon>Poxviridae</taxon>
        <taxon>Chordopoxvirinae</taxon>
        <taxon>Orthopoxvirus</taxon>
        <taxon>Variola virus</taxon>
    </lineage>
</organism>